<dbReference type="EC" id="5.3.1.26" evidence="1"/>
<dbReference type="EMBL" id="M60447">
    <property type="protein sequence ID" value="AAA25178.1"/>
    <property type="molecule type" value="Genomic_DNA"/>
</dbReference>
<dbReference type="EMBL" id="M65190">
    <property type="protein sequence ID" value="AAA25169.1"/>
    <property type="molecule type" value="Genomic_DNA"/>
</dbReference>
<dbReference type="PIR" id="B39778">
    <property type="entry name" value="B39778"/>
</dbReference>
<dbReference type="RefSeq" id="WP_011669102.1">
    <property type="nucleotide sequence ID" value="NZ_CP126667.1"/>
</dbReference>
<dbReference type="RefSeq" id="YP_005863085.1">
    <property type="nucleotide sequence ID" value="NC_017478.1"/>
</dbReference>
<dbReference type="SMR" id="P23495"/>
<dbReference type="KEGG" id="ag:AAA25178"/>
<dbReference type="BRENDA" id="5.3.1.26">
    <property type="organism ID" value="2903"/>
</dbReference>
<dbReference type="UniPathway" id="UPA00702">
    <property type="reaction ID" value="UER00714"/>
</dbReference>
<dbReference type="GO" id="GO:0050044">
    <property type="term" value="F:galactose-6-phosphate isomerase activity"/>
    <property type="evidence" value="ECO:0007669"/>
    <property type="project" value="UniProtKB-UniRule"/>
</dbReference>
<dbReference type="GO" id="GO:0004751">
    <property type="term" value="F:ribose-5-phosphate isomerase activity"/>
    <property type="evidence" value="ECO:0007669"/>
    <property type="project" value="TreeGrafter"/>
</dbReference>
<dbReference type="GO" id="GO:0019316">
    <property type="term" value="P:D-allose catabolic process"/>
    <property type="evidence" value="ECO:0007669"/>
    <property type="project" value="TreeGrafter"/>
</dbReference>
<dbReference type="GO" id="GO:0019388">
    <property type="term" value="P:galactose catabolic process"/>
    <property type="evidence" value="ECO:0007669"/>
    <property type="project" value="UniProtKB-UniPathway"/>
</dbReference>
<dbReference type="GO" id="GO:0019512">
    <property type="term" value="P:lactose catabolic process via tagatose-6-phosphate"/>
    <property type="evidence" value="ECO:0007669"/>
    <property type="project" value="UniProtKB-UniRule"/>
</dbReference>
<dbReference type="GO" id="GO:0009052">
    <property type="term" value="P:pentose-phosphate shunt, non-oxidative branch"/>
    <property type="evidence" value="ECO:0007669"/>
    <property type="project" value="TreeGrafter"/>
</dbReference>
<dbReference type="Gene3D" id="3.40.1400.10">
    <property type="entry name" value="Sugar-phosphate isomerase, RpiB/LacA/LacB"/>
    <property type="match status" value="1"/>
</dbReference>
<dbReference type="HAMAP" id="MF_01556">
    <property type="entry name" value="LacB"/>
    <property type="match status" value="1"/>
</dbReference>
<dbReference type="InterPro" id="IPR004784">
    <property type="entry name" value="LacB"/>
</dbReference>
<dbReference type="InterPro" id="IPR003500">
    <property type="entry name" value="RpiB_LacA_LacB"/>
</dbReference>
<dbReference type="InterPro" id="IPR036569">
    <property type="entry name" value="RpiB_LacA_LacB_sf"/>
</dbReference>
<dbReference type="NCBIfam" id="TIGR01119">
    <property type="entry name" value="lacB"/>
    <property type="match status" value="1"/>
</dbReference>
<dbReference type="NCBIfam" id="NF004051">
    <property type="entry name" value="PRK05571.1"/>
    <property type="match status" value="1"/>
</dbReference>
<dbReference type="NCBIfam" id="NF006381">
    <property type="entry name" value="PRK08622.1"/>
    <property type="match status" value="1"/>
</dbReference>
<dbReference type="NCBIfam" id="NF009258">
    <property type="entry name" value="PRK12615.1"/>
    <property type="match status" value="1"/>
</dbReference>
<dbReference type="NCBIfam" id="TIGR00689">
    <property type="entry name" value="rpiB_lacA_lacB"/>
    <property type="match status" value="1"/>
</dbReference>
<dbReference type="PANTHER" id="PTHR30345:SF0">
    <property type="entry name" value="DNA DAMAGE-REPAIR_TOLERATION PROTEIN DRT102"/>
    <property type="match status" value="1"/>
</dbReference>
<dbReference type="PANTHER" id="PTHR30345">
    <property type="entry name" value="RIBOSE-5-PHOSPHATE ISOMERASE B"/>
    <property type="match status" value="1"/>
</dbReference>
<dbReference type="Pfam" id="PF02502">
    <property type="entry name" value="LacAB_rpiB"/>
    <property type="match status" value="1"/>
</dbReference>
<dbReference type="PIRSF" id="PIRSF005384">
    <property type="entry name" value="RpiB_LacA_B"/>
    <property type="match status" value="1"/>
</dbReference>
<dbReference type="SUPFAM" id="SSF89623">
    <property type="entry name" value="Ribose/Galactose isomerase RpiB/AlsB"/>
    <property type="match status" value="1"/>
</dbReference>
<sequence>MRIAIGCDHIVTDVKMAVSEFLKSKGYEVLDFGTYDHVRTHYPIYGKKVGEAVVSGQADLGVCICGTGVGINNAVNKVPGVRSALVRDMTSALYAKEELNANVIGFGGMITGGLLMNDIIEAFIEAEYKPTEENKKLIAKIEHVETHNAHQADEEFFTEFLEKWDRGEYHD</sequence>
<reference key="1">
    <citation type="journal article" date="1991" name="J. Biol. Chem.">
        <title>Molecular cloning, characterization, and nucleotide sequence of the tagatose 6-phosphate pathway gene cluster of the lactose operon of Lactococcus lactis.</title>
        <authorList>
            <person name="van Rooijen R.J."/>
            <person name="van Schalkwijk S."/>
            <person name="de Vos W.M."/>
        </authorList>
    </citation>
    <scope>NUCLEOTIDE SEQUENCE [GENOMIC DNA]</scope>
    <scope>FUNCTION</scope>
    <scope>SUBUNIT</scope>
    <scope>OPERON STRUCTURE</scope>
    <scope>INDUCTION</scope>
    <source>
        <strain>MG1820</strain>
    </source>
</reference>
<evidence type="ECO:0000255" key="1">
    <source>
        <dbReference type="HAMAP-Rule" id="MF_01556"/>
    </source>
</evidence>
<evidence type="ECO:0000269" key="2">
    <source>
    </source>
</evidence>
<name>LACB_LACLL</name>
<geneLocation type="plasmid">
    <name>pLP712</name>
</geneLocation>
<gene>
    <name evidence="1" type="primary">lacB</name>
</gene>
<organism>
    <name type="scientific">Lactococcus lactis subsp. lactis</name>
    <name type="common">Streptococcus lactis</name>
    <dbReference type="NCBI Taxonomy" id="1360"/>
    <lineage>
        <taxon>Bacteria</taxon>
        <taxon>Bacillati</taxon>
        <taxon>Bacillota</taxon>
        <taxon>Bacilli</taxon>
        <taxon>Lactobacillales</taxon>
        <taxon>Streptococcaceae</taxon>
        <taxon>Lactococcus</taxon>
    </lineage>
</organism>
<accession>P23495</accession>
<feature type="chain" id="PRO_0000208135" description="Galactose-6-phosphate isomerase subunit LacB">
    <location>
        <begin position="1"/>
        <end position="171"/>
    </location>
</feature>
<proteinExistence type="evidence at protein level"/>
<comment type="catalytic activity">
    <reaction evidence="1">
        <text>aldehydo-D-galactose 6-phosphate = keto-D-tagatose 6-phosphate</text>
        <dbReference type="Rhea" id="RHEA:13033"/>
        <dbReference type="ChEBI" id="CHEBI:58255"/>
        <dbReference type="ChEBI" id="CHEBI:134283"/>
        <dbReference type="EC" id="5.3.1.26"/>
    </reaction>
</comment>
<comment type="pathway">
    <text evidence="1">Carbohydrate metabolism; D-galactose 6-phosphate degradation; D-tagatose 6-phosphate from D-galactose 6-phosphate: step 1/1.</text>
</comment>
<comment type="subunit">
    <text evidence="1 2">Heteromultimeric protein consisting of LacA and LacB.</text>
</comment>
<comment type="induction">
    <text evidence="2">By lactose. The operon consists of lacABCDFEGX.</text>
</comment>
<comment type="miscellaneous">
    <text>This gene was sequenced from pMG820, a laboratory-derived deletion of the naturally occurring plasmid pLP712.</text>
</comment>
<comment type="similarity">
    <text evidence="1">Belongs to the LacAB/RpiB family.</text>
</comment>
<keyword id="KW-0413">Isomerase</keyword>
<keyword id="KW-0423">Lactose metabolism</keyword>
<keyword id="KW-0614">Plasmid</keyword>
<protein>
    <recommendedName>
        <fullName evidence="1">Galactose-6-phosphate isomerase subunit LacB</fullName>
        <ecNumber evidence="1">5.3.1.26</ecNumber>
    </recommendedName>
</protein>